<name>RBFA_LIMRJ</name>
<reference key="1">
    <citation type="journal article" date="2008" name="DNA Res.">
        <title>Comparative genome analysis of Lactobacillus reuteri and Lactobacillus fermentum reveal a genomic island for reuterin and cobalamin production.</title>
        <authorList>
            <person name="Morita H."/>
            <person name="Toh H."/>
            <person name="Fukuda S."/>
            <person name="Horikawa H."/>
            <person name="Oshima K."/>
            <person name="Suzuki T."/>
            <person name="Murakami M."/>
            <person name="Hisamatsu S."/>
            <person name="Kato Y."/>
            <person name="Takizawa T."/>
            <person name="Fukuoka H."/>
            <person name="Yoshimura T."/>
            <person name="Itoh K."/>
            <person name="O'Sullivan D.J."/>
            <person name="McKay L.L."/>
            <person name="Ohno H."/>
            <person name="Kikuchi J."/>
            <person name="Masaoka T."/>
            <person name="Hattori M."/>
        </authorList>
    </citation>
    <scope>NUCLEOTIDE SEQUENCE [LARGE SCALE GENOMIC DNA]</scope>
    <source>
        <strain>JCM 1112</strain>
    </source>
</reference>
<protein>
    <recommendedName>
        <fullName evidence="1">Ribosome-binding factor A</fullName>
    </recommendedName>
</protein>
<keyword id="KW-0963">Cytoplasm</keyword>
<keyword id="KW-0690">Ribosome biogenesis</keyword>
<gene>
    <name evidence="1" type="primary">rbfA</name>
    <name type="ordered locus">LAR_0673</name>
</gene>
<proteinExistence type="inferred from homology"/>
<dbReference type="EMBL" id="AP007281">
    <property type="protein sequence ID" value="BAG25189.1"/>
    <property type="molecule type" value="Genomic_DNA"/>
</dbReference>
<dbReference type="RefSeq" id="WP_003665800.1">
    <property type="nucleotide sequence ID" value="NC_010609.1"/>
</dbReference>
<dbReference type="SMR" id="B2G6V7"/>
<dbReference type="GeneID" id="77190753"/>
<dbReference type="KEGG" id="lrf:LAR_0673"/>
<dbReference type="HOGENOM" id="CLU_089475_3_0_9"/>
<dbReference type="GO" id="GO:0005829">
    <property type="term" value="C:cytosol"/>
    <property type="evidence" value="ECO:0007669"/>
    <property type="project" value="TreeGrafter"/>
</dbReference>
<dbReference type="GO" id="GO:0043024">
    <property type="term" value="F:ribosomal small subunit binding"/>
    <property type="evidence" value="ECO:0007669"/>
    <property type="project" value="TreeGrafter"/>
</dbReference>
<dbReference type="GO" id="GO:0030490">
    <property type="term" value="P:maturation of SSU-rRNA"/>
    <property type="evidence" value="ECO:0007669"/>
    <property type="project" value="UniProtKB-UniRule"/>
</dbReference>
<dbReference type="Gene3D" id="3.30.300.20">
    <property type="match status" value="1"/>
</dbReference>
<dbReference type="HAMAP" id="MF_00003">
    <property type="entry name" value="RbfA"/>
    <property type="match status" value="1"/>
</dbReference>
<dbReference type="InterPro" id="IPR015946">
    <property type="entry name" value="KH_dom-like_a/b"/>
</dbReference>
<dbReference type="InterPro" id="IPR000238">
    <property type="entry name" value="RbfA"/>
</dbReference>
<dbReference type="InterPro" id="IPR023799">
    <property type="entry name" value="RbfA_dom_sf"/>
</dbReference>
<dbReference type="InterPro" id="IPR020053">
    <property type="entry name" value="Ribosome-bd_factorA_CS"/>
</dbReference>
<dbReference type="NCBIfam" id="TIGR00082">
    <property type="entry name" value="rbfA"/>
    <property type="match status" value="1"/>
</dbReference>
<dbReference type="PANTHER" id="PTHR33515">
    <property type="entry name" value="RIBOSOME-BINDING FACTOR A, CHLOROPLASTIC-RELATED"/>
    <property type="match status" value="1"/>
</dbReference>
<dbReference type="PANTHER" id="PTHR33515:SF1">
    <property type="entry name" value="RIBOSOME-BINDING FACTOR A, CHLOROPLASTIC-RELATED"/>
    <property type="match status" value="1"/>
</dbReference>
<dbReference type="Pfam" id="PF02033">
    <property type="entry name" value="RBFA"/>
    <property type="match status" value="1"/>
</dbReference>
<dbReference type="SUPFAM" id="SSF89919">
    <property type="entry name" value="Ribosome-binding factor A, RbfA"/>
    <property type="match status" value="1"/>
</dbReference>
<dbReference type="PROSITE" id="PS01319">
    <property type="entry name" value="RBFA"/>
    <property type="match status" value="1"/>
</dbReference>
<organism>
    <name type="scientific">Limosilactobacillus reuteri subsp. reuteri (strain JCM 1112)</name>
    <name type="common">Lactobacillus reuteri</name>
    <dbReference type="NCBI Taxonomy" id="557433"/>
    <lineage>
        <taxon>Bacteria</taxon>
        <taxon>Bacillati</taxon>
        <taxon>Bacillota</taxon>
        <taxon>Bacilli</taxon>
        <taxon>Lactobacillales</taxon>
        <taxon>Lactobacillaceae</taxon>
        <taxon>Limosilactobacillus</taxon>
    </lineage>
</organism>
<accession>B2G6V7</accession>
<evidence type="ECO:0000255" key="1">
    <source>
        <dbReference type="HAMAP-Rule" id="MF_00003"/>
    </source>
</evidence>
<feature type="chain" id="PRO_1000088900" description="Ribosome-binding factor A">
    <location>
        <begin position="1"/>
        <end position="119"/>
    </location>
</feature>
<comment type="function">
    <text evidence="1">One of several proteins that assist in the late maturation steps of the functional core of the 30S ribosomal subunit. Associates with free 30S ribosomal subunits (but not with 30S subunits that are part of 70S ribosomes or polysomes). Required for efficient processing of 16S rRNA. May interact with the 5'-terminal helix region of 16S rRNA.</text>
</comment>
<comment type="subunit">
    <text evidence="1">Monomer. Binds 30S ribosomal subunits, but not 50S ribosomal subunits or 70S ribosomes.</text>
</comment>
<comment type="subcellular location">
    <subcellularLocation>
        <location evidence="1">Cytoplasm</location>
    </subcellularLocation>
</comment>
<comment type="similarity">
    <text evidence="1">Belongs to the RbfA family.</text>
</comment>
<sequence length="119" mass="13412">MPSKQYRVDRLAQEIQKDVDEILLKRVRDPRVQNVTITGVDVTGDLQQATIYYSILSDLASDAEKAQAGLDKATGLIRSELGARLNIFKTPEIKFVRDPSVAYGSRIDQLINDLHKKEK</sequence>